<gene>
    <name evidence="1" type="primary">L1</name>
</gene>
<evidence type="ECO:0000255" key="1">
    <source>
        <dbReference type="HAMAP-Rule" id="MF_04002"/>
    </source>
</evidence>
<evidence type="ECO:0000256" key="2">
    <source>
        <dbReference type="SAM" id="MobiDB-lite"/>
    </source>
</evidence>
<organism>
    <name type="scientific">Human papillomavirus 22</name>
    <dbReference type="NCBI Taxonomy" id="37954"/>
    <lineage>
        <taxon>Viruses</taxon>
        <taxon>Monodnaviria</taxon>
        <taxon>Shotokuvirae</taxon>
        <taxon>Cossaviricota</taxon>
        <taxon>Papovaviricetes</taxon>
        <taxon>Zurhausenvirales</taxon>
        <taxon>Papillomaviridae</taxon>
        <taxon>Firstpapillomavirinae</taxon>
        <taxon>Betapapillomavirus</taxon>
        <taxon>Betapapillomavirus 2</taxon>
    </lineage>
</organism>
<accession>P50788</accession>
<protein>
    <recommendedName>
        <fullName evidence="1">Major capsid protein L1</fullName>
    </recommendedName>
</protein>
<dbReference type="EMBL" id="U31780">
    <property type="protein sequence ID" value="AAA79407.1"/>
    <property type="molecule type" value="Genomic_DNA"/>
</dbReference>
<dbReference type="EMBL" id="U21866">
    <property type="protein sequence ID" value="AAA92829.1"/>
    <property type="molecule type" value="Genomic_DNA"/>
</dbReference>
<dbReference type="SMR" id="P50788"/>
<dbReference type="Proteomes" id="UP000009111">
    <property type="component" value="Genome"/>
</dbReference>
<dbReference type="GO" id="GO:0042025">
    <property type="term" value="C:host cell nucleus"/>
    <property type="evidence" value="ECO:0007669"/>
    <property type="project" value="UniProtKB-SubCell"/>
</dbReference>
<dbReference type="GO" id="GO:0039620">
    <property type="term" value="C:T=7 icosahedral viral capsid"/>
    <property type="evidence" value="ECO:0007669"/>
    <property type="project" value="UniProtKB-UniRule"/>
</dbReference>
<dbReference type="GO" id="GO:0005198">
    <property type="term" value="F:structural molecule activity"/>
    <property type="evidence" value="ECO:0007669"/>
    <property type="project" value="UniProtKB-UniRule"/>
</dbReference>
<dbReference type="GO" id="GO:0075509">
    <property type="term" value="P:endocytosis involved in viral entry into host cell"/>
    <property type="evidence" value="ECO:0007669"/>
    <property type="project" value="UniProtKB-KW"/>
</dbReference>
<dbReference type="GO" id="GO:0019062">
    <property type="term" value="P:virion attachment to host cell"/>
    <property type="evidence" value="ECO:0007669"/>
    <property type="project" value="UniProtKB-UniRule"/>
</dbReference>
<dbReference type="Gene3D" id="2.60.175.20">
    <property type="entry name" value="Major capsid L1 (late) superfamily, Papillomavirus"/>
    <property type="match status" value="2"/>
</dbReference>
<dbReference type="HAMAP" id="MF_04002">
    <property type="entry name" value="PPV_L1"/>
    <property type="match status" value="1"/>
</dbReference>
<dbReference type="InterPro" id="IPR002210">
    <property type="entry name" value="Capsid_L1_Papillomavir"/>
</dbReference>
<dbReference type="InterPro" id="IPR036973">
    <property type="entry name" value="Capsid_L1_sf_Papillomavir"/>
</dbReference>
<dbReference type="InterPro" id="IPR011222">
    <property type="entry name" value="dsDNA_vir_gr_I_capsid"/>
</dbReference>
<dbReference type="Pfam" id="PF00500">
    <property type="entry name" value="Late_protein_L1"/>
    <property type="match status" value="1"/>
</dbReference>
<dbReference type="PRINTS" id="PR00865">
    <property type="entry name" value="HPVCAPSIDL1"/>
</dbReference>
<dbReference type="SUPFAM" id="SSF88648">
    <property type="entry name" value="Group I dsDNA viruses"/>
    <property type="match status" value="1"/>
</dbReference>
<organismHost>
    <name type="scientific">Homo sapiens</name>
    <name type="common">Human</name>
    <dbReference type="NCBI Taxonomy" id="9606"/>
</organismHost>
<comment type="function">
    <text evidence="1">Forms an icosahedral capsid with a T=7 symmetry and a 50 nm diameter. The capsid is composed of 72 pentamers linked to each other by disulfide bonds and associated with L2 proteins. Binds to heparan sulfate proteoglycans on cell surface of basal layer keratinocytes to provide initial virion attachment. This binding mediates a conformational change in the virus capsid that facilitates efficient infection. The virion enters the host cell via endocytosis. During virus trafficking, L1 protein dissociates from the viral DNA and the genomic DNA is released to the host nucleus. The virion assembly takes place within the cell nucleus. Encapsulates the genomic DNA together with protein L2.</text>
</comment>
<comment type="subunit">
    <text evidence="1">Self-assembles into homopentamers. The capsid has an icosahedral symmetry and consists of 72 capsomers, with each capsomer being a pentamer of L1. Interacts with the minor capsid protein L2; this interaction is necessary for viral genome encapsidation. Interacts with protein E2; this interaction enhances E2-dependent replication and transcription activation.</text>
</comment>
<comment type="subcellular location">
    <subcellularLocation>
        <location evidence="1">Virion</location>
    </subcellularLocation>
    <subcellularLocation>
        <location evidence="1">Host nucleus</location>
    </subcellularLocation>
</comment>
<comment type="similarity">
    <text evidence="1">Belongs to the papillomaviridae L1 protein family.</text>
</comment>
<keyword id="KW-0167">Capsid protein</keyword>
<keyword id="KW-1015">Disulfide bond</keyword>
<keyword id="KW-1048">Host nucleus</keyword>
<keyword id="KW-0945">Host-virus interaction</keyword>
<keyword id="KW-0426">Late protein</keyword>
<keyword id="KW-1185">Reference proteome</keyword>
<keyword id="KW-1145">T=7 icosahedral capsid protein</keyword>
<keyword id="KW-1161">Viral attachment to host cell</keyword>
<keyword id="KW-1162">Viral penetration into host cytoplasm</keyword>
<keyword id="KW-0946">Virion</keyword>
<keyword id="KW-1164">Virus endocytosis by host</keyword>
<keyword id="KW-1160">Virus entry into host cell</keyword>
<reference key="1">
    <citation type="submission" date="1995-10" db="EMBL/GenBank/DDBJ databases">
        <authorList>
            <person name="Delius H."/>
        </authorList>
    </citation>
    <scope>NUCLEOTIDE SEQUENCE [GENOMIC DNA]</scope>
</reference>
<reference key="2">
    <citation type="journal article" date="1995" name="J. Virol.">
        <title>Analysis of genomic sequences of 95 papillomavirus types: uniting typing, phylogeny, and taxonomy.</title>
        <authorList>
            <person name="Chan S.-Y."/>
            <person name="Delius H."/>
            <person name="Halpern A.L."/>
            <person name="Bernard H.U."/>
        </authorList>
    </citation>
    <scope>NUCLEOTIDE SEQUENCE [GENOMIC DNA] OF 369-464</scope>
</reference>
<sequence>MTLWLPTSGKIYLPPTPPVARVQNTDEYVERTDIYYHAISDRLLTVGHPYFDVRSSDGAKIEVPKVSGNQFRAFRVTFPDPNKFALGDMTIHDPERYRLVWACKGLEIGRGQPLGVGTTGHPLFNKLHDTENPTERQEGTSDDRRNVSFDPKQVQMFIIGCIPCLGEYWDKAPVCEDAGSQVGLCPPLELKNGVIEDGDMFDIGFGNINNKTLSFNRSDVSLDIVNEICKYPDFLTMSNDVYGDSCFFCARREQCYARHNFVRGGLVGDAIPDDAVQQDHKYYLPAASQTALENSTYFPTVSGSLVTSDAQLFNRPFWLKRAQGHNNGILWNNQMFVTVADNTRNTNFSISVASDGTTVNYDAKKIREFMRHVEEYQLSFILQLCRIPLEAEVLTQINAMNHGILENWQLGFVPTPDNSVHDTYRYLQSKATKCPDAVPDTQKEDPFGQYTFWNVDMSEKLSLDLDQYPLGRKFLFQSGLQRARASARVSVKRSATRKTSKTVKRRKLTS</sequence>
<name>VL1_HPV22</name>
<feature type="chain" id="PRO_0000133506" description="Major capsid protein L1">
    <location>
        <begin position="1"/>
        <end position="510"/>
    </location>
</feature>
<feature type="region of interest" description="Disordered" evidence="2">
    <location>
        <begin position="126"/>
        <end position="147"/>
    </location>
</feature>
<feature type="region of interest" description="Disordered" evidence="2">
    <location>
        <begin position="488"/>
        <end position="510"/>
    </location>
</feature>
<feature type="compositionally biased region" description="Basic residues" evidence="2">
    <location>
        <begin position="490"/>
        <end position="510"/>
    </location>
</feature>
<feature type="disulfide bond" description="Interchain (with C-434)" evidence="1">
    <location>
        <position position="175"/>
    </location>
</feature>
<feature type="disulfide bond" description="Interchain (with C-175)" evidence="1">
    <location>
        <position position="434"/>
    </location>
</feature>
<proteinExistence type="inferred from homology"/>